<gene>
    <name type="ordered locus">all4933</name>
</gene>
<comment type="function">
    <text evidence="2">Glucosyltransferase involved in the biosynthesis of the non-bilayer-forming membrane lipid beta-monoglucosyldiacylglycerol which contributes to regulate the properties and stability of the membrane. Catalyzes the transfer of a glucosyl residue from UDP-Glc to diacylglycerol (DAG) acceptor to form the corresponding beta-glucosyl-DAG (1,2-diacyl-3-O-(beta-D-glucopyranosyl)-sn-glycerol). It can only use UDP-Glc as sugar donor. Two types of DAG (dipalmitoyl-DAG (DPDAG) and 1-oleoyl-2-palmitoyl-DAG (OPDAG)) can be used as sugar acceptors, but OPDAG is preferred.</text>
</comment>
<comment type="catalytic activity">
    <reaction evidence="2">
        <text>a 1,2-diacyl-sn-glycerol + UDP-alpha-D-glucose = a 1,2-diacyl-3-O-(beta-D-glucopyranosyl)-sn-glycerol + UDP + H(+)</text>
        <dbReference type="Rhea" id="RHEA:17285"/>
        <dbReference type="ChEBI" id="CHEBI:15378"/>
        <dbReference type="ChEBI" id="CHEBI:17815"/>
        <dbReference type="ChEBI" id="CHEBI:58223"/>
        <dbReference type="ChEBI" id="CHEBI:58885"/>
        <dbReference type="ChEBI" id="CHEBI:75799"/>
        <dbReference type="EC" id="2.4.1.336"/>
    </reaction>
</comment>
<comment type="cofactor">
    <cofactor evidence="2">
        <name>Mg(2+)</name>
        <dbReference type="ChEBI" id="CHEBI:18420"/>
    </cofactor>
</comment>
<comment type="subcellular location">
    <subcellularLocation>
        <location evidence="3">Membrane</location>
        <topology evidence="3">Multi-pass membrane protein</topology>
    </subcellularLocation>
</comment>
<comment type="similarity">
    <text evidence="3">Belongs to the glycosyltransferase 2 family.</text>
</comment>
<sequence>MPANSWPDNDSYKELDPLNSLLSDVSTTEESVVETRDLSLPSRFQGRRGKAALVLTIVWSGTIALHLVSWGSIFILGLTTVLGIHALGVVFARPRHYQKEIQGSLPFVSILVAAKNEEAVIAKLAKNLCNLEYPNGQYEVWIIDDNSTDKTPHILAELAKEYDKLKVLRRSAQATGGKSGALNQVLPLTQGEIIAVFDADAQVASDMLLHVVPLFQREKVGAVQVRKAIANAKENFWTKGQMAEMSLDIWFQQQRTALGGIGELRGNGQFVRRQALDSCGGWNEETITDDLDLTFRLHLDKWDIECLFYPAVQEEGVTTAIALWHQRNRWAEGGYQRYLDYWDLILKNRMGTRKTWDMLMFMLTMYILPTAAIPDLLMALTRHRPPMLGPVTGLSVTMSVVGMFAGLRRIRQEQKFQVHTPFVLLLQTMRGTLYMLHWLVVMSSTTARMSFRPKRLKWVKTVHTGTGE</sequence>
<keyword id="KW-0119">Carbohydrate metabolism</keyword>
<keyword id="KW-0319">Glycerol metabolism</keyword>
<keyword id="KW-0328">Glycosyltransferase</keyword>
<keyword id="KW-0444">Lipid biosynthesis</keyword>
<keyword id="KW-0443">Lipid metabolism</keyword>
<keyword id="KW-0460">Magnesium</keyword>
<keyword id="KW-0472">Membrane</keyword>
<keyword id="KW-1185">Reference proteome</keyword>
<keyword id="KW-0808">Transferase</keyword>
<keyword id="KW-0812">Transmembrane</keyword>
<keyword id="KW-1133">Transmembrane helix</keyword>
<name>BMGDS_NOSS1</name>
<reference key="1">
    <citation type="journal article" date="2001" name="DNA Res.">
        <title>Complete genomic sequence of the filamentous nitrogen-fixing cyanobacterium Anabaena sp. strain PCC 7120.</title>
        <authorList>
            <person name="Kaneko T."/>
            <person name="Nakamura Y."/>
            <person name="Wolk C.P."/>
            <person name="Kuritz T."/>
            <person name="Sasamoto S."/>
            <person name="Watanabe A."/>
            <person name="Iriguchi M."/>
            <person name="Ishikawa A."/>
            <person name="Kawashima K."/>
            <person name="Kimura T."/>
            <person name="Kishida Y."/>
            <person name="Kohara M."/>
            <person name="Matsumoto M."/>
            <person name="Matsuno A."/>
            <person name="Muraki A."/>
            <person name="Nakazaki N."/>
            <person name="Shimpo S."/>
            <person name="Sugimoto M."/>
            <person name="Takazawa M."/>
            <person name="Yamada M."/>
            <person name="Yasuda M."/>
            <person name="Tabata S."/>
        </authorList>
    </citation>
    <scope>NUCLEOTIDE SEQUENCE [LARGE SCALE GENOMIC DNA]</scope>
    <source>
        <strain>PCC 7120 / SAG 25.82 / UTEX 2576</strain>
    </source>
</reference>
<reference key="2">
    <citation type="journal article" date="2006" name="Plant Physiol.">
        <title>Comparative genomic analysis revealed a gene for monoglucosyldiacylglycerol synthase, an enzyme for photosynthetic membrane lipid synthesis in cyanobacteria.</title>
        <authorList>
            <person name="Awai K."/>
            <person name="Kakimoto T."/>
            <person name="Awai C."/>
            <person name="Kaneko T."/>
            <person name="Nakamura Y."/>
            <person name="Takamiya K."/>
            <person name="Wada H."/>
            <person name="Ohta H."/>
        </authorList>
    </citation>
    <scope>FUNCTION</scope>
    <scope>CATALYTIC ACTIVITY</scope>
    <scope>SUBSTRATE SPECIFICITY</scope>
    <scope>COFACTOR</scope>
    <source>
        <strain>PCC 7120 / SAG 25.82 / UTEX 2576</strain>
    </source>
</reference>
<dbReference type="EC" id="2.4.1.336" evidence="2"/>
<dbReference type="EMBL" id="BA000019">
    <property type="protein sequence ID" value="BAB76632.1"/>
    <property type="molecule type" value="Genomic_DNA"/>
</dbReference>
<dbReference type="PIR" id="AE2422">
    <property type="entry name" value="AE2422"/>
</dbReference>
<dbReference type="RefSeq" id="WP_010999059.1">
    <property type="nucleotide sequence ID" value="NZ_RSCN01000018.1"/>
</dbReference>
<dbReference type="SMR" id="Q8YMK0"/>
<dbReference type="STRING" id="103690.gene:10496988"/>
<dbReference type="CAZy" id="GT2">
    <property type="family name" value="Glycosyltransferase Family 2"/>
</dbReference>
<dbReference type="KEGG" id="ana:all4933"/>
<dbReference type="eggNOG" id="COG1215">
    <property type="taxonomic scope" value="Bacteria"/>
</dbReference>
<dbReference type="OrthoDB" id="9766299at2"/>
<dbReference type="Proteomes" id="UP000002483">
    <property type="component" value="Chromosome"/>
</dbReference>
<dbReference type="GO" id="GO:0005886">
    <property type="term" value="C:plasma membrane"/>
    <property type="evidence" value="ECO:0007669"/>
    <property type="project" value="TreeGrafter"/>
</dbReference>
<dbReference type="GO" id="GO:0016758">
    <property type="term" value="F:hexosyltransferase activity"/>
    <property type="evidence" value="ECO:0000314"/>
    <property type="project" value="UniProtKB"/>
</dbReference>
<dbReference type="GO" id="GO:0000287">
    <property type="term" value="F:magnesium ion binding"/>
    <property type="evidence" value="ECO:0000250"/>
    <property type="project" value="UniProtKB"/>
</dbReference>
<dbReference type="GO" id="GO:0006071">
    <property type="term" value="P:glycerol metabolic process"/>
    <property type="evidence" value="ECO:0007669"/>
    <property type="project" value="UniProtKB-KW"/>
</dbReference>
<dbReference type="GO" id="GO:0046467">
    <property type="term" value="P:membrane lipid biosynthetic process"/>
    <property type="evidence" value="ECO:0000314"/>
    <property type="project" value="UniProtKB"/>
</dbReference>
<dbReference type="CDD" id="cd06423">
    <property type="entry name" value="CESA_like"/>
    <property type="match status" value="1"/>
</dbReference>
<dbReference type="FunFam" id="3.90.550.10:FF:000164">
    <property type="entry name" value="Beta-(1-3)-glucosyl transferase"/>
    <property type="match status" value="1"/>
</dbReference>
<dbReference type="Gene3D" id="3.90.550.10">
    <property type="entry name" value="Spore Coat Polysaccharide Biosynthesis Protein SpsA, Chain A"/>
    <property type="match status" value="1"/>
</dbReference>
<dbReference type="InterPro" id="IPR001173">
    <property type="entry name" value="Glyco_trans_2-like"/>
</dbReference>
<dbReference type="InterPro" id="IPR050321">
    <property type="entry name" value="Glycosyltr_2/OpgH_subfam"/>
</dbReference>
<dbReference type="InterPro" id="IPR029044">
    <property type="entry name" value="Nucleotide-diphossugar_trans"/>
</dbReference>
<dbReference type="PANTHER" id="PTHR43867">
    <property type="entry name" value="CELLULOSE SYNTHASE CATALYTIC SUBUNIT A [UDP-FORMING]"/>
    <property type="match status" value="1"/>
</dbReference>
<dbReference type="PANTHER" id="PTHR43867:SF2">
    <property type="entry name" value="CELLULOSE SYNTHASE CATALYTIC SUBUNIT A [UDP-FORMING]"/>
    <property type="match status" value="1"/>
</dbReference>
<dbReference type="Pfam" id="PF00535">
    <property type="entry name" value="Glycos_transf_2"/>
    <property type="match status" value="1"/>
</dbReference>
<dbReference type="SUPFAM" id="SSF53448">
    <property type="entry name" value="Nucleotide-diphospho-sugar transferases"/>
    <property type="match status" value="1"/>
</dbReference>
<feature type="chain" id="PRO_0000425269" description="Beta-monoglucosyldiacylglycerol synthase">
    <location>
        <begin position="1"/>
        <end position="468"/>
    </location>
</feature>
<feature type="transmembrane region" description="Helical" evidence="1">
    <location>
        <begin position="51"/>
        <end position="71"/>
    </location>
</feature>
<feature type="transmembrane region" description="Helical" evidence="1">
    <location>
        <begin position="72"/>
        <end position="92"/>
    </location>
</feature>
<feature type="transmembrane region" description="Helical" evidence="1">
    <location>
        <begin position="358"/>
        <end position="378"/>
    </location>
</feature>
<feature type="transmembrane region" description="Helical" evidence="1">
    <location>
        <begin position="387"/>
        <end position="407"/>
    </location>
</feature>
<evidence type="ECO:0000255" key="1"/>
<evidence type="ECO:0000269" key="2">
    <source>
    </source>
</evidence>
<evidence type="ECO:0000305" key="3"/>
<proteinExistence type="evidence at protein level"/>
<protein>
    <recommendedName>
        <fullName>Beta-monoglucosyldiacylglycerol synthase</fullName>
        <shortName>Beta-MGS</shortName>
        <shortName>MGlcDAG synthase</shortName>
        <ecNumber evidence="2">2.4.1.336</ecNumber>
    </recommendedName>
    <alternativeName>
        <fullName>UDP-glucose:1,2-diacylglycerol 3-beta-D-glucosyltransferase</fullName>
    </alternativeName>
</protein>
<organism>
    <name type="scientific">Nostoc sp. (strain PCC 7120 / SAG 25.82 / UTEX 2576)</name>
    <dbReference type="NCBI Taxonomy" id="103690"/>
    <lineage>
        <taxon>Bacteria</taxon>
        <taxon>Bacillati</taxon>
        <taxon>Cyanobacteriota</taxon>
        <taxon>Cyanophyceae</taxon>
        <taxon>Nostocales</taxon>
        <taxon>Nostocaceae</taxon>
        <taxon>Nostoc</taxon>
    </lineage>
</organism>
<accession>Q8YMK0</accession>